<gene>
    <name evidence="1" type="primary">mutS</name>
    <name type="ordered locus">SpyM51780</name>
</gene>
<protein>
    <recommendedName>
        <fullName evidence="1">DNA mismatch repair protein MutS</fullName>
    </recommendedName>
</protein>
<sequence>MAKTNISPGMQQYLDIKKDYPDAFLLFRMGDFYELFYDDAVKAAQLLEIGLTSRNKNAENPIPMAGVPHHSAQQYIDVLIELGYKVAVAEQMEDPKQAVGVVKREVVQVITPGTVVDSAKPDSANNFLVAVDFDGCRYGLAYMDVSTGEFCVTDLADFTSVRSEIQNLKAKEVLLGFDLSEEEQTILVKQMNLLLSYEETVYEDKSLIDGQLTTVELTAAGKLLQYVHKTQMRELSHLQALVHYEIKDYLQMSYATKSSLDLVENARTNKKHGSLYWLLDETKTAMGMRLLRSWIDRPLVSKEAILERQEIIQVFLNAFIERTDLSNSLKGVYDIERLSSRVSFGKANPKDLLQLGHTLAQVPYIKAILESFDSPCVDKLVNDIDSLPELEYLIRTAIDPDAPATISEGSIIRTGFDERLDHYRKVMREGTGWIADIEAKERQASGINNLKIDYNKKDGYYFHVTTSNLSLVPEHFFRKATLKNSERYGTAELAKIEGQMLEAREESSSLEYDIFMCIRAQVETYINRLQKLAKILATVDVLQSLAVVAETNHYIRPQFNDNHVITIQEGRHAVVEKVMGVQEYIPNSISFDQQTSIQLITGPNMSGKSTYMRQLALTVIMAQMGSFVAADHVDLPLFDAIFTRIGAADDLISGQSTFMVEMMEANQAIKRASDNSLILFDELGRGTATYDGMALAQAIIEYIHDRVGAKTIFATHYHELTDLSTKLTSLVNVHVATLEKDGDVTFLHKIAEGPADKSYGIHVAKIAGLPKSLLKRADEVLTRLETQSRSTEIMSVPPQVESSSAVRQGQLSLFGDEEKAHEIRQALEAIDVMNMTPLQAMTTLYELKKLL</sequence>
<feature type="chain" id="PRO_1000008111" description="DNA mismatch repair protein MutS">
    <location>
        <begin position="1"/>
        <end position="851"/>
    </location>
</feature>
<feature type="binding site" evidence="1">
    <location>
        <begin position="602"/>
        <end position="609"/>
    </location>
    <ligand>
        <name>ATP</name>
        <dbReference type="ChEBI" id="CHEBI:30616"/>
    </ligand>
</feature>
<proteinExistence type="inferred from homology"/>
<name>MUTS_STRPG</name>
<dbReference type="EMBL" id="AM295007">
    <property type="protein sequence ID" value="CAM31104.1"/>
    <property type="molecule type" value="Genomic_DNA"/>
</dbReference>
<dbReference type="RefSeq" id="WP_011185079.1">
    <property type="nucleotide sequence ID" value="NC_009332.1"/>
</dbReference>
<dbReference type="SMR" id="A2RGX2"/>
<dbReference type="KEGG" id="spf:SpyM51780"/>
<dbReference type="HOGENOM" id="CLU_002472_3_1_9"/>
<dbReference type="GO" id="GO:0005829">
    <property type="term" value="C:cytosol"/>
    <property type="evidence" value="ECO:0007669"/>
    <property type="project" value="TreeGrafter"/>
</dbReference>
<dbReference type="GO" id="GO:0005524">
    <property type="term" value="F:ATP binding"/>
    <property type="evidence" value="ECO:0007669"/>
    <property type="project" value="UniProtKB-UniRule"/>
</dbReference>
<dbReference type="GO" id="GO:0140664">
    <property type="term" value="F:ATP-dependent DNA damage sensor activity"/>
    <property type="evidence" value="ECO:0007669"/>
    <property type="project" value="InterPro"/>
</dbReference>
<dbReference type="GO" id="GO:0003684">
    <property type="term" value="F:damaged DNA binding"/>
    <property type="evidence" value="ECO:0007669"/>
    <property type="project" value="UniProtKB-UniRule"/>
</dbReference>
<dbReference type="GO" id="GO:0030983">
    <property type="term" value="F:mismatched DNA binding"/>
    <property type="evidence" value="ECO:0007669"/>
    <property type="project" value="InterPro"/>
</dbReference>
<dbReference type="GO" id="GO:0006298">
    <property type="term" value="P:mismatch repair"/>
    <property type="evidence" value="ECO:0007669"/>
    <property type="project" value="UniProtKB-UniRule"/>
</dbReference>
<dbReference type="CDD" id="cd03284">
    <property type="entry name" value="ABC_MutS1"/>
    <property type="match status" value="1"/>
</dbReference>
<dbReference type="FunFam" id="1.10.1420.10:FF:000001">
    <property type="entry name" value="DNA mismatch repair protein MutS"/>
    <property type="match status" value="1"/>
</dbReference>
<dbReference type="FunFam" id="3.40.1170.10:FF:000001">
    <property type="entry name" value="DNA mismatch repair protein MutS"/>
    <property type="match status" value="1"/>
</dbReference>
<dbReference type="FunFam" id="3.40.50.300:FF:000896">
    <property type="entry name" value="DNA mismatch repair protein MutS"/>
    <property type="match status" value="1"/>
</dbReference>
<dbReference type="Gene3D" id="1.10.1420.10">
    <property type="match status" value="2"/>
</dbReference>
<dbReference type="Gene3D" id="3.40.1170.10">
    <property type="entry name" value="DNA repair protein MutS, domain I"/>
    <property type="match status" value="1"/>
</dbReference>
<dbReference type="Gene3D" id="3.30.420.110">
    <property type="entry name" value="MutS, connector domain"/>
    <property type="match status" value="1"/>
</dbReference>
<dbReference type="Gene3D" id="3.40.50.300">
    <property type="entry name" value="P-loop containing nucleotide triphosphate hydrolases"/>
    <property type="match status" value="1"/>
</dbReference>
<dbReference type="HAMAP" id="MF_00096">
    <property type="entry name" value="MutS"/>
    <property type="match status" value="1"/>
</dbReference>
<dbReference type="InterPro" id="IPR005748">
    <property type="entry name" value="DNA_mismatch_repair_MutS"/>
</dbReference>
<dbReference type="InterPro" id="IPR007695">
    <property type="entry name" value="DNA_mismatch_repair_MutS-lik_N"/>
</dbReference>
<dbReference type="InterPro" id="IPR017261">
    <property type="entry name" value="DNA_mismatch_repair_MutS/MSH"/>
</dbReference>
<dbReference type="InterPro" id="IPR000432">
    <property type="entry name" value="DNA_mismatch_repair_MutS_C"/>
</dbReference>
<dbReference type="InterPro" id="IPR007861">
    <property type="entry name" value="DNA_mismatch_repair_MutS_clamp"/>
</dbReference>
<dbReference type="InterPro" id="IPR007696">
    <property type="entry name" value="DNA_mismatch_repair_MutS_core"/>
</dbReference>
<dbReference type="InterPro" id="IPR016151">
    <property type="entry name" value="DNA_mismatch_repair_MutS_N"/>
</dbReference>
<dbReference type="InterPro" id="IPR036187">
    <property type="entry name" value="DNA_mismatch_repair_MutS_sf"/>
</dbReference>
<dbReference type="InterPro" id="IPR007860">
    <property type="entry name" value="DNA_mmatch_repair_MutS_con_dom"/>
</dbReference>
<dbReference type="InterPro" id="IPR045076">
    <property type="entry name" value="MutS"/>
</dbReference>
<dbReference type="InterPro" id="IPR036678">
    <property type="entry name" value="MutS_con_dom_sf"/>
</dbReference>
<dbReference type="InterPro" id="IPR027417">
    <property type="entry name" value="P-loop_NTPase"/>
</dbReference>
<dbReference type="NCBIfam" id="TIGR01070">
    <property type="entry name" value="mutS1"/>
    <property type="match status" value="1"/>
</dbReference>
<dbReference type="NCBIfam" id="NF003810">
    <property type="entry name" value="PRK05399.1"/>
    <property type="match status" value="1"/>
</dbReference>
<dbReference type="PANTHER" id="PTHR11361:SF34">
    <property type="entry name" value="DNA MISMATCH REPAIR PROTEIN MSH1, MITOCHONDRIAL"/>
    <property type="match status" value="1"/>
</dbReference>
<dbReference type="PANTHER" id="PTHR11361">
    <property type="entry name" value="DNA MISMATCH REPAIR PROTEIN MUTS FAMILY MEMBER"/>
    <property type="match status" value="1"/>
</dbReference>
<dbReference type="Pfam" id="PF01624">
    <property type="entry name" value="MutS_I"/>
    <property type="match status" value="1"/>
</dbReference>
<dbReference type="Pfam" id="PF05188">
    <property type="entry name" value="MutS_II"/>
    <property type="match status" value="1"/>
</dbReference>
<dbReference type="Pfam" id="PF05192">
    <property type="entry name" value="MutS_III"/>
    <property type="match status" value="1"/>
</dbReference>
<dbReference type="Pfam" id="PF05190">
    <property type="entry name" value="MutS_IV"/>
    <property type="match status" value="1"/>
</dbReference>
<dbReference type="Pfam" id="PF00488">
    <property type="entry name" value="MutS_V"/>
    <property type="match status" value="1"/>
</dbReference>
<dbReference type="PIRSF" id="PIRSF037677">
    <property type="entry name" value="DNA_mis_repair_Msh6"/>
    <property type="match status" value="1"/>
</dbReference>
<dbReference type="SMART" id="SM00534">
    <property type="entry name" value="MUTSac"/>
    <property type="match status" value="1"/>
</dbReference>
<dbReference type="SMART" id="SM00533">
    <property type="entry name" value="MUTSd"/>
    <property type="match status" value="1"/>
</dbReference>
<dbReference type="SUPFAM" id="SSF55271">
    <property type="entry name" value="DNA repair protein MutS, domain I"/>
    <property type="match status" value="1"/>
</dbReference>
<dbReference type="SUPFAM" id="SSF53150">
    <property type="entry name" value="DNA repair protein MutS, domain II"/>
    <property type="match status" value="1"/>
</dbReference>
<dbReference type="SUPFAM" id="SSF48334">
    <property type="entry name" value="DNA repair protein MutS, domain III"/>
    <property type="match status" value="1"/>
</dbReference>
<dbReference type="SUPFAM" id="SSF52540">
    <property type="entry name" value="P-loop containing nucleoside triphosphate hydrolases"/>
    <property type="match status" value="1"/>
</dbReference>
<dbReference type="PROSITE" id="PS00486">
    <property type="entry name" value="DNA_MISMATCH_REPAIR_2"/>
    <property type="match status" value="1"/>
</dbReference>
<evidence type="ECO:0000255" key="1">
    <source>
        <dbReference type="HAMAP-Rule" id="MF_00096"/>
    </source>
</evidence>
<comment type="function">
    <text evidence="1">This protein is involved in the repair of mismatches in DNA. It is possible that it carries out the mismatch recognition step. This protein has a weak ATPase activity.</text>
</comment>
<comment type="similarity">
    <text evidence="1">Belongs to the DNA mismatch repair MutS family.</text>
</comment>
<reference key="1">
    <citation type="journal article" date="2007" name="J. Bacteriol.">
        <title>Complete genome of acute rheumatic fever-associated serotype M5 Streptococcus pyogenes strain Manfredo.</title>
        <authorList>
            <person name="Holden M.T.G."/>
            <person name="Scott A."/>
            <person name="Cherevach I."/>
            <person name="Chillingworth T."/>
            <person name="Churcher C."/>
            <person name="Cronin A."/>
            <person name="Dowd L."/>
            <person name="Feltwell T."/>
            <person name="Hamlin N."/>
            <person name="Holroyd S."/>
            <person name="Jagels K."/>
            <person name="Moule S."/>
            <person name="Mungall K."/>
            <person name="Quail M.A."/>
            <person name="Price C."/>
            <person name="Rabbinowitsch E."/>
            <person name="Sharp S."/>
            <person name="Skelton J."/>
            <person name="Whitehead S."/>
            <person name="Barrell B.G."/>
            <person name="Kehoe M."/>
            <person name="Parkhill J."/>
        </authorList>
    </citation>
    <scope>NUCLEOTIDE SEQUENCE [LARGE SCALE GENOMIC DNA]</scope>
    <source>
        <strain>Manfredo</strain>
    </source>
</reference>
<organism>
    <name type="scientific">Streptococcus pyogenes serotype M5 (strain Manfredo)</name>
    <dbReference type="NCBI Taxonomy" id="160491"/>
    <lineage>
        <taxon>Bacteria</taxon>
        <taxon>Bacillati</taxon>
        <taxon>Bacillota</taxon>
        <taxon>Bacilli</taxon>
        <taxon>Lactobacillales</taxon>
        <taxon>Streptococcaceae</taxon>
        <taxon>Streptococcus</taxon>
    </lineage>
</organism>
<keyword id="KW-0067">ATP-binding</keyword>
<keyword id="KW-0227">DNA damage</keyword>
<keyword id="KW-0234">DNA repair</keyword>
<keyword id="KW-0238">DNA-binding</keyword>
<keyword id="KW-0547">Nucleotide-binding</keyword>
<accession>A2RGX2</accession>